<protein>
    <recommendedName>
        <fullName evidence="1">Small ribosomal subunit protein uS15</fullName>
    </recommendedName>
    <alternativeName>
        <fullName evidence="2">30S ribosomal protein S15</fullName>
    </alternativeName>
</protein>
<gene>
    <name evidence="1" type="primary">rpsO</name>
    <name type="ordered locus">Krad_1465</name>
</gene>
<organism>
    <name type="scientific">Kineococcus radiotolerans (strain ATCC BAA-149 / DSM 14245 / SRS30216)</name>
    <dbReference type="NCBI Taxonomy" id="266940"/>
    <lineage>
        <taxon>Bacteria</taxon>
        <taxon>Bacillati</taxon>
        <taxon>Actinomycetota</taxon>
        <taxon>Actinomycetes</taxon>
        <taxon>Kineosporiales</taxon>
        <taxon>Kineosporiaceae</taxon>
        <taxon>Kineococcus</taxon>
    </lineage>
</organism>
<reference key="1">
    <citation type="journal article" date="2008" name="PLoS ONE">
        <title>Survival in nuclear waste, extreme resistance, and potential applications gleaned from the genome sequence of Kineococcus radiotolerans SRS30216.</title>
        <authorList>
            <person name="Bagwell C.E."/>
            <person name="Bhat S."/>
            <person name="Hawkins G.M."/>
            <person name="Smith B.W."/>
            <person name="Biswas T."/>
            <person name="Hoover T.R."/>
            <person name="Saunders E."/>
            <person name="Han C.S."/>
            <person name="Tsodikov O.V."/>
            <person name="Shimkets L.J."/>
        </authorList>
    </citation>
    <scope>NUCLEOTIDE SEQUENCE [LARGE SCALE GENOMIC DNA]</scope>
    <source>
        <strain>ATCC BAA-149 / DSM 14245 / SRS30216</strain>
    </source>
</reference>
<name>RS15_KINRD</name>
<sequence>MPLDAAVKKSIMAEYATSEGDTGSPEVQVAMLTQRIRDLTEHLKTHQHDHHSRRGLLLLVGQRRNLLKYMAKKDINRYRSIIERLGIRR</sequence>
<comment type="function">
    <text evidence="1">One of the primary rRNA binding proteins, it binds directly to 16S rRNA where it helps nucleate assembly of the platform of the 30S subunit by binding and bridging several RNA helices of the 16S rRNA.</text>
</comment>
<comment type="function">
    <text evidence="1">Forms an intersubunit bridge (bridge B4) with the 23S rRNA of the 50S subunit in the ribosome.</text>
</comment>
<comment type="subunit">
    <text evidence="1">Part of the 30S ribosomal subunit. Forms a bridge to the 50S subunit in the 70S ribosome, contacting the 23S rRNA.</text>
</comment>
<comment type="similarity">
    <text evidence="1">Belongs to the universal ribosomal protein uS15 family.</text>
</comment>
<comment type="sequence caution" evidence="2">
    <conflict type="erroneous initiation">
        <sequence resource="EMBL-CDS" id="ABS02953"/>
    </conflict>
</comment>
<evidence type="ECO:0000255" key="1">
    <source>
        <dbReference type="HAMAP-Rule" id="MF_01343"/>
    </source>
</evidence>
<evidence type="ECO:0000305" key="2"/>
<keyword id="KW-1185">Reference proteome</keyword>
<keyword id="KW-0687">Ribonucleoprotein</keyword>
<keyword id="KW-0689">Ribosomal protein</keyword>
<keyword id="KW-0694">RNA-binding</keyword>
<keyword id="KW-0699">rRNA-binding</keyword>
<proteinExistence type="inferred from homology"/>
<accession>A6W814</accession>
<dbReference type="EMBL" id="CP000750">
    <property type="protein sequence ID" value="ABS02953.1"/>
    <property type="status" value="ALT_INIT"/>
    <property type="molecule type" value="Genomic_DNA"/>
</dbReference>
<dbReference type="RefSeq" id="WP_041291885.1">
    <property type="nucleotide sequence ID" value="NC_009664.2"/>
</dbReference>
<dbReference type="SMR" id="A6W814"/>
<dbReference type="STRING" id="266940.Krad_1465"/>
<dbReference type="KEGG" id="kra:Krad_1465"/>
<dbReference type="eggNOG" id="COG0184">
    <property type="taxonomic scope" value="Bacteria"/>
</dbReference>
<dbReference type="HOGENOM" id="CLU_148518_0_0_11"/>
<dbReference type="OrthoDB" id="9799262at2"/>
<dbReference type="Proteomes" id="UP000001116">
    <property type="component" value="Chromosome"/>
</dbReference>
<dbReference type="GO" id="GO:0022627">
    <property type="term" value="C:cytosolic small ribosomal subunit"/>
    <property type="evidence" value="ECO:0007669"/>
    <property type="project" value="TreeGrafter"/>
</dbReference>
<dbReference type="GO" id="GO:0019843">
    <property type="term" value="F:rRNA binding"/>
    <property type="evidence" value="ECO:0007669"/>
    <property type="project" value="UniProtKB-UniRule"/>
</dbReference>
<dbReference type="GO" id="GO:0003735">
    <property type="term" value="F:structural constituent of ribosome"/>
    <property type="evidence" value="ECO:0007669"/>
    <property type="project" value="InterPro"/>
</dbReference>
<dbReference type="GO" id="GO:0006412">
    <property type="term" value="P:translation"/>
    <property type="evidence" value="ECO:0007669"/>
    <property type="project" value="UniProtKB-UniRule"/>
</dbReference>
<dbReference type="CDD" id="cd00353">
    <property type="entry name" value="Ribosomal_S15p_S13e"/>
    <property type="match status" value="1"/>
</dbReference>
<dbReference type="FunFam" id="1.10.287.10:FF:000002">
    <property type="entry name" value="30S ribosomal protein S15"/>
    <property type="match status" value="1"/>
</dbReference>
<dbReference type="Gene3D" id="6.10.250.3130">
    <property type="match status" value="1"/>
</dbReference>
<dbReference type="Gene3D" id="1.10.287.10">
    <property type="entry name" value="S15/NS1, RNA-binding"/>
    <property type="match status" value="1"/>
</dbReference>
<dbReference type="HAMAP" id="MF_01343_B">
    <property type="entry name" value="Ribosomal_uS15_B"/>
    <property type="match status" value="1"/>
</dbReference>
<dbReference type="InterPro" id="IPR000589">
    <property type="entry name" value="Ribosomal_uS15"/>
</dbReference>
<dbReference type="InterPro" id="IPR005290">
    <property type="entry name" value="Ribosomal_uS15_bac-type"/>
</dbReference>
<dbReference type="InterPro" id="IPR009068">
    <property type="entry name" value="uS15_NS1_RNA-bd_sf"/>
</dbReference>
<dbReference type="NCBIfam" id="TIGR00952">
    <property type="entry name" value="S15_bact"/>
    <property type="match status" value="1"/>
</dbReference>
<dbReference type="PANTHER" id="PTHR23321">
    <property type="entry name" value="RIBOSOMAL PROTEIN S15, BACTERIAL AND ORGANELLAR"/>
    <property type="match status" value="1"/>
</dbReference>
<dbReference type="PANTHER" id="PTHR23321:SF26">
    <property type="entry name" value="SMALL RIBOSOMAL SUBUNIT PROTEIN US15M"/>
    <property type="match status" value="1"/>
</dbReference>
<dbReference type="Pfam" id="PF00312">
    <property type="entry name" value="Ribosomal_S15"/>
    <property type="match status" value="1"/>
</dbReference>
<dbReference type="SMART" id="SM01387">
    <property type="entry name" value="Ribosomal_S15"/>
    <property type="match status" value="1"/>
</dbReference>
<dbReference type="SUPFAM" id="SSF47060">
    <property type="entry name" value="S15/NS1 RNA-binding domain"/>
    <property type="match status" value="1"/>
</dbReference>
<dbReference type="PROSITE" id="PS00362">
    <property type="entry name" value="RIBOSOMAL_S15"/>
    <property type="match status" value="1"/>
</dbReference>
<feature type="chain" id="PRO_0000354201" description="Small ribosomal subunit protein uS15">
    <location>
        <begin position="1"/>
        <end position="89"/>
    </location>
</feature>